<name>PHOSP_RYSV</name>
<evidence type="ECO:0000250" key="1"/>
<evidence type="ECO:0000256" key="2">
    <source>
        <dbReference type="SAM" id="MobiDB-lite"/>
    </source>
</evidence>
<evidence type="ECO:0000305" key="3"/>
<organismHost>
    <name type="scientific">Oryza sativa</name>
    <name type="common">Rice</name>
    <dbReference type="NCBI Taxonomy" id="4530"/>
</organismHost>
<organism>
    <name type="scientific">Rice yellow stunt virus</name>
    <name type="common">RYSV</name>
    <name type="synonym">Rice transitory yellowing virus</name>
    <dbReference type="NCBI Taxonomy" id="59380"/>
    <lineage>
        <taxon>Viruses</taxon>
        <taxon>Riboviria</taxon>
        <taxon>Orthornavirae</taxon>
        <taxon>Negarnaviricota</taxon>
        <taxon>Haploviricotina</taxon>
        <taxon>Monjiviricetes</taxon>
        <taxon>Mononegavirales</taxon>
        <taxon>Rhabdoviridae</taxon>
        <taxon>Betarhabdovirinae</taxon>
        <taxon>Alphanucleorhabdovirus</taxon>
        <taxon>Alphanucleorhabdovirus oryzae</taxon>
    </lineage>
</organism>
<accession>O70790</accession>
<accession>Q86522</accession>
<keyword id="KW-0143">Chaperone</keyword>
<keyword id="KW-1035">Host cytoplasm</keyword>
<keyword id="KW-0597">Phosphoprotein</keyword>
<keyword id="KW-1185">Reference proteome</keyword>
<keyword id="KW-0693">Viral RNA replication</keyword>
<keyword id="KW-0946">Virion</keyword>
<protein>
    <recommendedName>
        <fullName>Phosphoprotein</fullName>
        <shortName>Protein P</shortName>
    </recommendedName>
    <alternativeName>
        <fullName>Protein M1</fullName>
    </alternativeName>
</protein>
<proteinExistence type="inferred from homology"/>
<feature type="chain" id="PRO_0000299227" description="Phosphoprotein">
    <location>
        <begin position="1"/>
        <end position="322"/>
    </location>
</feature>
<feature type="region of interest" description="Disordered" evidence="2">
    <location>
        <begin position="1"/>
        <end position="46"/>
    </location>
</feature>
<feature type="region of interest" description="Disordered" evidence="2">
    <location>
        <begin position="60"/>
        <end position="117"/>
    </location>
</feature>
<feature type="compositionally biased region" description="Polar residues" evidence="2">
    <location>
        <begin position="1"/>
        <end position="10"/>
    </location>
</feature>
<feature type="compositionally biased region" description="Low complexity" evidence="2">
    <location>
        <begin position="11"/>
        <end position="22"/>
    </location>
</feature>
<feature type="compositionally biased region" description="Basic and acidic residues" evidence="2">
    <location>
        <begin position="28"/>
        <end position="46"/>
    </location>
</feature>
<feature type="compositionally biased region" description="Basic and acidic residues" evidence="2">
    <location>
        <begin position="60"/>
        <end position="70"/>
    </location>
</feature>
<feature type="compositionally biased region" description="Polar residues" evidence="2">
    <location>
        <begin position="74"/>
        <end position="84"/>
    </location>
</feature>
<feature type="compositionally biased region" description="Polar residues" evidence="2">
    <location>
        <begin position="107"/>
        <end position="117"/>
    </location>
</feature>
<feature type="sequence conflict" description="In Ref. 1; AAA92922." evidence="3" ref="1">
    <original>S</original>
    <variation>D</variation>
    <location>
        <position position="4"/>
    </location>
</feature>
<comment type="function">
    <text evidence="1">Non catalytic polymerase cofactor and regulatory protein that plays a role in viral transcription and replication. Stabilizes the RNA polymerase L to the N-RNA template and binds the soluble protein N, preventing it from encapsidating non-genomic RNA (By similarity).</text>
</comment>
<comment type="subunit">
    <text evidence="1">Homotrimer when phosphorylated. This trimer is stabilized by binding to the L protein. Binds soluble protein N, and ribonucleocapsid (By similarity).</text>
</comment>
<comment type="subcellular location">
    <subcellularLocation>
        <location>Virion</location>
    </subcellularLocation>
    <subcellularLocation>
        <location evidence="1">Host cytoplasm</location>
    </subcellularLocation>
</comment>
<comment type="PTM">
    <text evidence="1">Phosphorylated by host kinases.</text>
</comment>
<sequence>MSGSGSEQTPRLTRSSSRSTLTGVASGRVEKIRSSPKSLDRIAKKYKDFDPETAKIIRADLEETQADKTMEVGGSTQESAQQITGAKRPNEEDQGGAQEAAKRVNRSNKVNSLLTSNGVTDPAKSKISNYIVGRLNANNIEADSVMVAECTNIAIHAWKEGKKYLDDKIISQATTTIPTLITNLVSNANTLSNVIASLNNVPDKLVSDIRTQVENVSNQTGQKAAKRDVLLKSSESIYNNAVKESKVDFINNYLTSSGVNVDELRKDSHHYRTVVSRIEKKYTVLVMMPEHEEHHTLKEKVATNRTFVKESAQTLSQKYVTQ</sequence>
<gene>
    <name type="primary">P</name>
</gene>
<reference key="1">
    <citation type="submission" date="1996-01" db="EMBL/GenBank/DDBJ databases">
        <authorList>
            <person name="Zhu H.T."/>
            <person name="Fang R.X."/>
            <person name="Chen X.Y."/>
        </authorList>
    </citation>
    <scope>NUCLEOTIDE SEQUENCE [GENOMIC RNA]</scope>
</reference>
<reference key="2">
    <citation type="journal article" date="2003" name="J. Gen. Virol.">
        <title>Novel structure of the genome of Rice yellow stunt virus: identification of the gene 6-encoded virion protein.</title>
        <authorList>
            <person name="Huang Y."/>
            <person name="Zhao H."/>
            <person name="Luo Z."/>
            <person name="Chen X."/>
            <person name="Fang R.X."/>
        </authorList>
    </citation>
    <scope>NUCLEOTIDE SEQUENCE [GENOMIC RNA]</scope>
</reference>
<dbReference type="EMBL" id="U47053">
    <property type="protein sequence ID" value="AAA92922.1"/>
    <property type="molecule type" value="Genomic_RNA"/>
</dbReference>
<dbReference type="EMBL" id="AB011257">
    <property type="protein sequence ID" value="BAA25155.1"/>
    <property type="molecule type" value="Genomic_RNA"/>
</dbReference>
<dbReference type="KEGG" id="vg:944312"/>
<dbReference type="Proteomes" id="UP000002325">
    <property type="component" value="Genome"/>
</dbReference>
<dbReference type="GO" id="GO:0030430">
    <property type="term" value="C:host cell cytoplasm"/>
    <property type="evidence" value="ECO:0007669"/>
    <property type="project" value="UniProtKB-SubCell"/>
</dbReference>
<dbReference type="GO" id="GO:0044423">
    <property type="term" value="C:virion component"/>
    <property type="evidence" value="ECO:0007669"/>
    <property type="project" value="UniProtKB-KW"/>
</dbReference>